<feature type="chain" id="PRO_1000006230" description="Serine hydroxymethyltransferase">
    <location>
        <begin position="1"/>
        <end position="414"/>
    </location>
</feature>
<feature type="binding site" evidence="1">
    <location>
        <position position="116"/>
    </location>
    <ligand>
        <name>(6S)-5,6,7,8-tetrahydrofolate</name>
        <dbReference type="ChEBI" id="CHEBI:57453"/>
    </ligand>
</feature>
<feature type="binding site" evidence="1">
    <location>
        <begin position="120"/>
        <end position="122"/>
    </location>
    <ligand>
        <name>(6S)-5,6,7,8-tetrahydrofolate</name>
        <dbReference type="ChEBI" id="CHEBI:57453"/>
    </ligand>
</feature>
<feature type="binding site" evidence="1">
    <location>
        <position position="240"/>
    </location>
    <ligand>
        <name>(6S)-5,6,7,8-tetrahydrofolate</name>
        <dbReference type="ChEBI" id="CHEBI:57453"/>
    </ligand>
</feature>
<feature type="binding site" evidence="1">
    <location>
        <begin position="348"/>
        <end position="350"/>
    </location>
    <ligand>
        <name>(6S)-5,6,7,8-tetrahydrofolate</name>
        <dbReference type="ChEBI" id="CHEBI:57453"/>
    </ligand>
</feature>
<feature type="site" description="Plays an important role in substrate specificity" evidence="1">
    <location>
        <position position="223"/>
    </location>
</feature>
<feature type="modified residue" description="N6-(pyridoxal phosphate)lysine" evidence="1">
    <location>
        <position position="224"/>
    </location>
</feature>
<gene>
    <name evidence="1" type="primary">glyA</name>
    <name type="ordered locus">CFF8240_1141</name>
</gene>
<sequence length="414" mass="45515">MSLESFDKDIYSLVNKELERQCDHLEMIASENFTYPDVMEVMGSVLTNKYAEGYPSKRYYGGCEFVDEIEQIAIDRCKKLFGCEFANVQPNSGSQANQGVYGAFLKPGDKILGMDLSHGGHLTHGSKVSSSGKNYESFFYGVELDGRINYNKVEEIANITKPKMIVCGASAYAREIDFKKFREIADSVGAYLFADVAHIAGLVVAGEHNNPFPHCHVVSSTTHKTLRGPRGGIIMTNDEEFAKKINSSIFPGIQGGPLMHVIAGKAVGFKHNLSDEWKVYAKQVKTNAKKLGEVLINRGYDLVSGGTDNHLVLVSFLNKEFSGKDADIALGNAGITVNKNTVPGETRSPFITSGIRVGSPALTARGMKESEFELIANRIADVLDDIDNSSKQEKIKAELKELAHQFIIYDKAMF</sequence>
<organism>
    <name type="scientific">Campylobacter fetus subsp. fetus (strain 82-40)</name>
    <dbReference type="NCBI Taxonomy" id="360106"/>
    <lineage>
        <taxon>Bacteria</taxon>
        <taxon>Pseudomonadati</taxon>
        <taxon>Campylobacterota</taxon>
        <taxon>Epsilonproteobacteria</taxon>
        <taxon>Campylobacterales</taxon>
        <taxon>Campylobacteraceae</taxon>
        <taxon>Campylobacter</taxon>
    </lineage>
</organism>
<name>GLYA_CAMFF</name>
<keyword id="KW-0028">Amino-acid biosynthesis</keyword>
<keyword id="KW-0963">Cytoplasm</keyword>
<keyword id="KW-0554">One-carbon metabolism</keyword>
<keyword id="KW-0663">Pyridoxal phosphate</keyword>
<keyword id="KW-0808">Transferase</keyword>
<proteinExistence type="inferred from homology"/>
<dbReference type="EC" id="2.1.2.1" evidence="1"/>
<dbReference type="EMBL" id="CP000487">
    <property type="protein sequence ID" value="ABK83407.1"/>
    <property type="molecule type" value="Genomic_DNA"/>
</dbReference>
<dbReference type="RefSeq" id="WP_002849766.1">
    <property type="nucleotide sequence ID" value="NC_008599.1"/>
</dbReference>
<dbReference type="SMR" id="A0RQ16"/>
<dbReference type="KEGG" id="cff:CFF8240_1141"/>
<dbReference type="eggNOG" id="COG0112">
    <property type="taxonomic scope" value="Bacteria"/>
</dbReference>
<dbReference type="HOGENOM" id="CLU_022477_2_1_7"/>
<dbReference type="UniPathway" id="UPA00193"/>
<dbReference type="UniPathway" id="UPA00288">
    <property type="reaction ID" value="UER01023"/>
</dbReference>
<dbReference type="Proteomes" id="UP000000760">
    <property type="component" value="Chromosome"/>
</dbReference>
<dbReference type="GO" id="GO:0005829">
    <property type="term" value="C:cytosol"/>
    <property type="evidence" value="ECO:0007669"/>
    <property type="project" value="TreeGrafter"/>
</dbReference>
<dbReference type="GO" id="GO:0004372">
    <property type="term" value="F:glycine hydroxymethyltransferase activity"/>
    <property type="evidence" value="ECO:0007669"/>
    <property type="project" value="UniProtKB-UniRule"/>
</dbReference>
<dbReference type="GO" id="GO:0030170">
    <property type="term" value="F:pyridoxal phosphate binding"/>
    <property type="evidence" value="ECO:0007669"/>
    <property type="project" value="UniProtKB-UniRule"/>
</dbReference>
<dbReference type="GO" id="GO:0019264">
    <property type="term" value="P:glycine biosynthetic process from serine"/>
    <property type="evidence" value="ECO:0007669"/>
    <property type="project" value="UniProtKB-UniRule"/>
</dbReference>
<dbReference type="GO" id="GO:0035999">
    <property type="term" value="P:tetrahydrofolate interconversion"/>
    <property type="evidence" value="ECO:0007669"/>
    <property type="project" value="UniProtKB-UniRule"/>
</dbReference>
<dbReference type="CDD" id="cd00378">
    <property type="entry name" value="SHMT"/>
    <property type="match status" value="1"/>
</dbReference>
<dbReference type="FunFam" id="3.40.640.10:FF:000001">
    <property type="entry name" value="Serine hydroxymethyltransferase"/>
    <property type="match status" value="1"/>
</dbReference>
<dbReference type="Gene3D" id="3.90.1150.10">
    <property type="entry name" value="Aspartate Aminotransferase, domain 1"/>
    <property type="match status" value="1"/>
</dbReference>
<dbReference type="Gene3D" id="3.40.640.10">
    <property type="entry name" value="Type I PLP-dependent aspartate aminotransferase-like (Major domain)"/>
    <property type="match status" value="1"/>
</dbReference>
<dbReference type="HAMAP" id="MF_00051">
    <property type="entry name" value="SHMT"/>
    <property type="match status" value="1"/>
</dbReference>
<dbReference type="InterPro" id="IPR015424">
    <property type="entry name" value="PyrdxlP-dep_Trfase"/>
</dbReference>
<dbReference type="InterPro" id="IPR015421">
    <property type="entry name" value="PyrdxlP-dep_Trfase_major"/>
</dbReference>
<dbReference type="InterPro" id="IPR015422">
    <property type="entry name" value="PyrdxlP-dep_Trfase_small"/>
</dbReference>
<dbReference type="InterPro" id="IPR001085">
    <property type="entry name" value="Ser_HO-MeTrfase"/>
</dbReference>
<dbReference type="InterPro" id="IPR049943">
    <property type="entry name" value="Ser_HO-MeTrfase-like"/>
</dbReference>
<dbReference type="InterPro" id="IPR019798">
    <property type="entry name" value="Ser_HO-MeTrfase_PLP_BS"/>
</dbReference>
<dbReference type="InterPro" id="IPR039429">
    <property type="entry name" value="SHMT-like_dom"/>
</dbReference>
<dbReference type="NCBIfam" id="NF000586">
    <property type="entry name" value="PRK00011.1"/>
    <property type="match status" value="1"/>
</dbReference>
<dbReference type="PANTHER" id="PTHR11680">
    <property type="entry name" value="SERINE HYDROXYMETHYLTRANSFERASE"/>
    <property type="match status" value="1"/>
</dbReference>
<dbReference type="PANTHER" id="PTHR11680:SF50">
    <property type="entry name" value="SERINE HYDROXYMETHYLTRANSFERASE"/>
    <property type="match status" value="1"/>
</dbReference>
<dbReference type="Pfam" id="PF00464">
    <property type="entry name" value="SHMT"/>
    <property type="match status" value="1"/>
</dbReference>
<dbReference type="PIRSF" id="PIRSF000412">
    <property type="entry name" value="SHMT"/>
    <property type="match status" value="1"/>
</dbReference>
<dbReference type="SUPFAM" id="SSF53383">
    <property type="entry name" value="PLP-dependent transferases"/>
    <property type="match status" value="1"/>
</dbReference>
<dbReference type="PROSITE" id="PS00096">
    <property type="entry name" value="SHMT"/>
    <property type="match status" value="1"/>
</dbReference>
<comment type="function">
    <text evidence="1">Catalyzes the reversible interconversion of serine and glycine with tetrahydrofolate (THF) serving as the one-carbon carrier. This reaction serves as the major source of one-carbon groups required for the biosynthesis of purines, thymidylate, methionine, and other important biomolecules. Also exhibits THF-independent aldolase activity toward beta-hydroxyamino acids, producing glycine and aldehydes, via a retro-aldol mechanism.</text>
</comment>
<comment type="catalytic activity">
    <reaction evidence="1">
        <text>(6R)-5,10-methylene-5,6,7,8-tetrahydrofolate + glycine + H2O = (6S)-5,6,7,8-tetrahydrofolate + L-serine</text>
        <dbReference type="Rhea" id="RHEA:15481"/>
        <dbReference type="ChEBI" id="CHEBI:15377"/>
        <dbReference type="ChEBI" id="CHEBI:15636"/>
        <dbReference type="ChEBI" id="CHEBI:33384"/>
        <dbReference type="ChEBI" id="CHEBI:57305"/>
        <dbReference type="ChEBI" id="CHEBI:57453"/>
        <dbReference type="EC" id="2.1.2.1"/>
    </reaction>
</comment>
<comment type="cofactor">
    <cofactor evidence="1">
        <name>pyridoxal 5'-phosphate</name>
        <dbReference type="ChEBI" id="CHEBI:597326"/>
    </cofactor>
</comment>
<comment type="pathway">
    <text evidence="1">One-carbon metabolism; tetrahydrofolate interconversion.</text>
</comment>
<comment type="pathway">
    <text evidence="1">Amino-acid biosynthesis; glycine biosynthesis; glycine from L-serine: step 1/1.</text>
</comment>
<comment type="subunit">
    <text evidence="1">Homodimer.</text>
</comment>
<comment type="subcellular location">
    <subcellularLocation>
        <location evidence="1">Cytoplasm</location>
    </subcellularLocation>
</comment>
<comment type="similarity">
    <text evidence="1">Belongs to the SHMT family.</text>
</comment>
<reference key="1">
    <citation type="submission" date="2006-11" db="EMBL/GenBank/DDBJ databases">
        <title>Sequence of Campylobacter fetus subsp. fetus 82-40.</title>
        <authorList>
            <person name="Fouts D.E."/>
            <person name="Nelson K.E."/>
        </authorList>
    </citation>
    <scope>NUCLEOTIDE SEQUENCE [LARGE SCALE GENOMIC DNA]</scope>
    <source>
        <strain>82-40</strain>
    </source>
</reference>
<evidence type="ECO:0000255" key="1">
    <source>
        <dbReference type="HAMAP-Rule" id="MF_00051"/>
    </source>
</evidence>
<protein>
    <recommendedName>
        <fullName evidence="1">Serine hydroxymethyltransferase</fullName>
        <shortName evidence="1">SHMT</shortName>
        <shortName evidence="1">Serine methylase</shortName>
        <ecNumber evidence="1">2.1.2.1</ecNumber>
    </recommendedName>
</protein>
<accession>A0RQ16</accession>